<accession>P11158</accession>
<accession>Q76ZX1</accession>
<comment type="function">
    <text evidence="3">Ribonucleoside-diphosphate reductase holoenzyme provides the precursors necessary for viral DNA synthesis. Allows virus growth in non-dividing cells. Catalyzes the biosynthesis of deoxyribonucleotides from the corresponding ribonucleotides.</text>
</comment>
<comment type="catalytic activity">
    <reaction evidence="2 6">
        <text>a 2'-deoxyribonucleoside 5'-diphosphate + [thioredoxin]-disulfide + H2O = a ribonucleoside 5'-diphosphate + [thioredoxin]-dithiol</text>
        <dbReference type="Rhea" id="RHEA:23252"/>
        <dbReference type="Rhea" id="RHEA-COMP:10698"/>
        <dbReference type="Rhea" id="RHEA-COMP:10700"/>
        <dbReference type="ChEBI" id="CHEBI:15377"/>
        <dbReference type="ChEBI" id="CHEBI:29950"/>
        <dbReference type="ChEBI" id="CHEBI:50058"/>
        <dbReference type="ChEBI" id="CHEBI:57930"/>
        <dbReference type="ChEBI" id="CHEBI:73316"/>
        <dbReference type="EC" id="1.17.4.1"/>
    </reaction>
    <physiologicalReaction direction="right-to-left" evidence="8">
        <dbReference type="Rhea" id="RHEA:23254"/>
    </physiologicalReaction>
</comment>
<comment type="cofactor">
    <cofactor evidence="1">
        <name>Fe cation</name>
        <dbReference type="ChEBI" id="CHEBI:24875"/>
    </cofactor>
    <text evidence="1">Binds 2 iron ions per subunit.</text>
</comment>
<comment type="subunit">
    <text evidence="3">Interacts with RNR1/OPG080 subunit. Can interact with host RNR1 supunit.</text>
</comment>
<comment type="induction">
    <text evidence="4 5 6">Expressed in the early phase of the viral replicative cycle.</text>
</comment>
<comment type="similarity">
    <text evidence="7">Belongs to the ribonucleoside diphosphate reductase small chain family.</text>
</comment>
<evidence type="ECO:0000250" key="1"/>
<evidence type="ECO:0000255" key="2">
    <source>
        <dbReference type="PROSITE-ProRule" id="PRU10014"/>
    </source>
</evidence>
<evidence type="ECO:0000269" key="3">
    <source>
    </source>
</evidence>
<evidence type="ECO:0000269" key="4">
    <source>
    </source>
</evidence>
<evidence type="ECO:0000269" key="5">
    <source>
    </source>
</evidence>
<evidence type="ECO:0000269" key="6">
    <source>
    </source>
</evidence>
<evidence type="ECO:0000305" key="7"/>
<evidence type="ECO:0000305" key="8">
    <source>
    </source>
</evidence>
<dbReference type="EC" id="1.17.4.1"/>
<dbReference type="EMBL" id="M34368">
    <property type="protein sequence ID" value="AAA48244.1"/>
    <property type="molecule type" value="mRNA"/>
</dbReference>
<dbReference type="EMBL" id="M19117">
    <property type="protein sequence ID" value="AAA88680.1"/>
    <property type="molecule type" value="Genomic_DNA"/>
</dbReference>
<dbReference type="EMBL" id="AY243312">
    <property type="protein sequence ID" value="AAO89322.1"/>
    <property type="molecule type" value="Genomic_DNA"/>
</dbReference>
<dbReference type="PIR" id="A29892">
    <property type="entry name" value="RDVZVV"/>
</dbReference>
<dbReference type="RefSeq" id="YP_232925.1">
    <property type="nucleotide sequence ID" value="NC_006998.1"/>
</dbReference>
<dbReference type="SMR" id="P11158"/>
<dbReference type="DIP" id="DIP-2157N"/>
<dbReference type="IntAct" id="P11158">
    <property type="interactions" value="1"/>
</dbReference>
<dbReference type="MINT" id="P11158"/>
<dbReference type="DNASU" id="3707500"/>
<dbReference type="GeneID" id="3707500"/>
<dbReference type="KEGG" id="vg:3707500"/>
<dbReference type="Proteomes" id="UP000000344">
    <property type="component" value="Genome"/>
</dbReference>
<dbReference type="GO" id="GO:0046872">
    <property type="term" value="F:metal ion binding"/>
    <property type="evidence" value="ECO:0007669"/>
    <property type="project" value="UniProtKB-KW"/>
</dbReference>
<dbReference type="GO" id="GO:0004748">
    <property type="term" value="F:ribonucleoside-diphosphate reductase activity, thioredoxin disulfide as acceptor"/>
    <property type="evidence" value="ECO:0007669"/>
    <property type="project" value="UniProtKB-EC"/>
</dbReference>
<dbReference type="GO" id="GO:0009263">
    <property type="term" value="P:deoxyribonucleotide biosynthetic process"/>
    <property type="evidence" value="ECO:0007669"/>
    <property type="project" value="UniProtKB-KW"/>
</dbReference>
<dbReference type="CDD" id="cd01049">
    <property type="entry name" value="RNRR2"/>
    <property type="match status" value="1"/>
</dbReference>
<dbReference type="FunFam" id="1.10.620.20:FF:000004">
    <property type="entry name" value="Ribonucleoside-diphosphate reductase subunit M2 B"/>
    <property type="match status" value="1"/>
</dbReference>
<dbReference type="Gene3D" id="1.10.620.20">
    <property type="entry name" value="Ribonucleotide Reductase, subunit A"/>
    <property type="match status" value="1"/>
</dbReference>
<dbReference type="InterPro" id="IPR009078">
    <property type="entry name" value="Ferritin-like_SF"/>
</dbReference>
<dbReference type="InterPro" id="IPR012348">
    <property type="entry name" value="RNR-like"/>
</dbReference>
<dbReference type="InterPro" id="IPR033909">
    <property type="entry name" value="RNR_small"/>
</dbReference>
<dbReference type="InterPro" id="IPR030475">
    <property type="entry name" value="RNR_small_AS"/>
</dbReference>
<dbReference type="InterPro" id="IPR000358">
    <property type="entry name" value="RNR_small_fam"/>
</dbReference>
<dbReference type="PANTHER" id="PTHR23409">
    <property type="entry name" value="RIBONUCLEOSIDE-DIPHOSPHATE REDUCTASE SMALL CHAIN"/>
    <property type="match status" value="1"/>
</dbReference>
<dbReference type="PANTHER" id="PTHR23409:SF18">
    <property type="entry name" value="RIBONUCLEOSIDE-DIPHOSPHATE REDUCTASE SUBUNIT M2"/>
    <property type="match status" value="1"/>
</dbReference>
<dbReference type="Pfam" id="PF00268">
    <property type="entry name" value="Ribonuc_red_sm"/>
    <property type="match status" value="1"/>
</dbReference>
<dbReference type="SUPFAM" id="SSF47240">
    <property type="entry name" value="Ferritin-like"/>
    <property type="match status" value="1"/>
</dbReference>
<dbReference type="PROSITE" id="PS00368">
    <property type="entry name" value="RIBORED_SMALL"/>
    <property type="match status" value="1"/>
</dbReference>
<sequence length="319" mass="36973">MEPILAPNPNRFVIFPIQYYDIWNMYKKAEASFWTVEEVDISKDINDWNKLTPDEKYFIKHVLAFFAASDGIVNENLAERFCTEVQITEARCFYGFQMAIENIHSEMYSLLIDTYVKDSNEKNYLFNAIETMPCVKKKADWAQKWIHDSAGYGERLIAFAAVEGIFFSGSFASIFWLKKRGLMPGLTFSNELISRDEGLHCDFACLMFKHLLHPPSEETVRSIITDAVSIEQEFLTAALPVKLIGMNCEMMKTYIEFVADRLISELGFKKIYNVTNPFDFMENISLEGKTNFFEKRVGEYQKMGVMSQEDNHFSLDVDF</sequence>
<name>RIR2_VACCW</name>
<feature type="chain" id="PRO_0000190498" description="Ribonucleoside-diphosphate reductase small chain">
    <location>
        <begin position="1"/>
        <end position="319"/>
    </location>
</feature>
<feature type="region of interest" description="Interaction with R1" evidence="3">
    <location>
        <begin position="313"/>
        <end position="319"/>
    </location>
</feature>
<feature type="active site" evidence="2">
    <location>
        <position position="108"/>
    </location>
</feature>
<feature type="binding site" evidence="2">
    <location>
        <position position="70"/>
    </location>
    <ligand>
        <name>Fe cation</name>
        <dbReference type="ChEBI" id="CHEBI:24875"/>
        <label>1</label>
    </ligand>
</feature>
<feature type="binding site" evidence="2">
    <location>
        <position position="101"/>
    </location>
    <ligand>
        <name>Fe cation</name>
        <dbReference type="ChEBI" id="CHEBI:24875"/>
        <label>1</label>
    </ligand>
</feature>
<feature type="binding site" evidence="1">
    <location>
        <position position="101"/>
    </location>
    <ligand>
        <name>Fe cation</name>
        <dbReference type="ChEBI" id="CHEBI:24875"/>
        <label>2</label>
    </ligand>
</feature>
<feature type="binding site" evidence="2">
    <location>
        <position position="104"/>
    </location>
    <ligand>
        <name>Fe cation</name>
        <dbReference type="ChEBI" id="CHEBI:24875"/>
        <label>1</label>
    </ligand>
</feature>
<feature type="binding site" evidence="1">
    <location>
        <position position="163"/>
    </location>
    <ligand>
        <name>Fe cation</name>
        <dbReference type="ChEBI" id="CHEBI:24875"/>
        <label>2</label>
    </ligand>
</feature>
<feature type="binding site" evidence="1">
    <location>
        <position position="197"/>
    </location>
    <ligand>
        <name>Fe cation</name>
        <dbReference type="ChEBI" id="CHEBI:24875"/>
        <label>2</label>
    </ligand>
</feature>
<feature type="binding site" evidence="1">
    <location>
        <position position="200"/>
    </location>
    <ligand>
        <name>Fe cation</name>
        <dbReference type="ChEBI" id="CHEBI:24875"/>
        <label>2</label>
    </ligand>
</feature>
<feature type="mutagenesis site" description="Partial loss of viral DNA synthesis." evidence="3">
    <original>Y</original>
    <variation>F</variation>
    <location>
        <position position="300"/>
    </location>
</feature>
<feature type="mutagenesis site" description="Complete loss of R1 binding." evidence="3">
    <location>
        <begin position="313"/>
        <end position="319"/>
    </location>
</feature>
<keyword id="KW-0215">Deoxyribonucleotide synthesis</keyword>
<keyword id="KW-0244">Early protein</keyword>
<keyword id="KW-0408">Iron</keyword>
<keyword id="KW-0479">Metal-binding</keyword>
<keyword id="KW-0560">Oxidoreductase</keyword>
<keyword id="KW-1185">Reference proteome</keyword>
<organismHost>
    <name type="scientific">Bos taurus</name>
    <name type="common">Bovine</name>
    <dbReference type="NCBI Taxonomy" id="9913"/>
</organismHost>
<protein>
    <recommendedName>
        <fullName>Ribonucleoside-diphosphate reductase small chain</fullName>
        <ecNumber>1.17.4.1</ecNumber>
    </recommendedName>
    <alternativeName>
        <fullName>Ribonucleotide reductase small subunit</fullName>
    </alternativeName>
    <alternativeName>
        <fullName>Ribonucleotide reductase subunit 2</fullName>
        <shortName>RNR2</shortName>
    </alternativeName>
</protein>
<gene>
    <name type="primary">OPG048</name>
    <name type="ordered locus">VACWR043</name>
    <name type="ORF">F4L</name>
</gene>
<reference key="1">
    <citation type="journal article" date="1990" name="Virology">
        <title>The vaccinia virus HindIII F fragment: nucleotide sequence of the left 6.2 kb.</title>
        <authorList>
            <person name="Roseman N.A."/>
            <person name="Slabaugh M.B."/>
        </authorList>
    </citation>
    <scope>NUCLEOTIDE SEQUENCE [MRNA]</scope>
    <scope>INDUCTION</scope>
</reference>
<reference key="2">
    <citation type="journal article" date="1988" name="J. Virol.">
        <title>Vaccinia virus-encoded ribonucleotide reductase: sequence conservation of the gene for the small subunit and its amplification in hydroxyurea-resistant mutants.</title>
        <authorList>
            <person name="Slabaugh M."/>
            <person name="Roseman N."/>
            <person name="Davis R."/>
            <person name="Mathews C."/>
        </authorList>
    </citation>
    <scope>NUCLEOTIDE SEQUENCE [GENOMIC DNA]</scope>
</reference>
<reference key="3">
    <citation type="submission" date="2003-02" db="EMBL/GenBank/DDBJ databases">
        <title>Sequencing of the coding region of Vaccinia-WR to an average 9-fold redundancy and an error rate of 0.16/10kb.</title>
        <authorList>
            <person name="Esposito J.J."/>
            <person name="Frace A.M."/>
            <person name="Sammons S.A."/>
            <person name="Olsen-Rasmussen M."/>
            <person name="Osborne J."/>
            <person name="Wohlhueter R."/>
        </authorList>
    </citation>
    <scope>NUCLEOTIDE SEQUENCE [LARGE SCALE GENOMIC DNA]</scope>
</reference>
<reference key="4">
    <citation type="journal article" date="1986" name="J. Virol.">
        <title>Hydroxyurea-resistant vaccinia virus: overproduction of ribonucleotide reductase.</title>
        <authorList>
            <person name="Slabaugh M.B."/>
            <person name="Mathews C.K."/>
        </authorList>
    </citation>
    <scope>ENZYME ACTIVITY</scope>
    <scope>INDUCTION</scope>
</reference>
<reference key="5">
    <citation type="journal article" date="2010" name="PLoS Pathog.">
        <title>Vaccinia virus-encoded ribonucleotide reductase subunits are differentially required for replication and pathogenesis.</title>
        <authorList>
            <person name="Gammon D.B."/>
            <person name="Gowrishankar B."/>
            <person name="Duraffour S."/>
            <person name="Andrei G."/>
            <person name="Upton C."/>
            <person name="Evans D.H."/>
        </authorList>
    </citation>
    <scope>FUNCTION</scope>
    <scope>MUTAGENESIS OF TYR-300 AND 313-PHE--PHE-320</scope>
    <scope>INTERACTION WITH RNR1/OPG080</scope>
</reference>
<reference key="6">
    <citation type="journal article" date="2015" name="J. Virol.">
        <title>Deciphering poxvirus gene expression by RNA sequencing and ribosome profiling.</title>
        <authorList>
            <person name="Yang Z."/>
            <person name="Cao S."/>
            <person name="Martens C.A."/>
            <person name="Porcella S.F."/>
            <person name="Xie Z."/>
            <person name="Ma M."/>
            <person name="Shen B."/>
            <person name="Moss B."/>
        </authorList>
    </citation>
    <scope>INDUCTION</scope>
</reference>
<organism>
    <name type="scientific">Vaccinia virus (strain Western Reserve)</name>
    <name type="common">VACV</name>
    <name type="synonym">Vaccinia virus (strain WR)</name>
    <dbReference type="NCBI Taxonomy" id="10254"/>
    <lineage>
        <taxon>Viruses</taxon>
        <taxon>Varidnaviria</taxon>
        <taxon>Bamfordvirae</taxon>
        <taxon>Nucleocytoviricota</taxon>
        <taxon>Pokkesviricetes</taxon>
        <taxon>Chitovirales</taxon>
        <taxon>Poxviridae</taxon>
        <taxon>Chordopoxvirinae</taxon>
        <taxon>Orthopoxvirus</taxon>
        <taxon>Vaccinia virus</taxon>
    </lineage>
</organism>
<proteinExistence type="evidence at protein level"/>